<evidence type="ECO:0000255" key="1">
    <source>
        <dbReference type="HAMAP-Rule" id="MF_01384"/>
    </source>
</evidence>
<proteinExistence type="inferred from homology"/>
<sequence length="287" mass="32505">MPKINTSSSGWLADISLFYERRGTNTKLVHREQVGPLMVQRPFYPETGVAHTYLLHPPGGVVGGDQLNINIHVSPQAHSLLTTPGATKFYRSSGAISSQTQNLTVESDGFLEWLPQENIFFPDSQAQLKTQVELHKDAHFIGWEMNCFGRPVLNEIFENGFVTGRTNIKVDDQLLLSESMYIDSIDEIKHAAGMRHYPMLGNLYIYPASEALEEKLRTLIDENFHEQPELFGSSNPICGITEIDGLLVIRYLGHQTEPMMACFSTLWQHTRQHWLGKLPEVPRIWAT</sequence>
<reference key="1">
    <citation type="submission" date="2008-08" db="EMBL/GenBank/DDBJ databases">
        <title>Complete sequence of Vibrio fischeri strain MJ11.</title>
        <authorList>
            <person name="Mandel M.J."/>
            <person name="Stabb E.V."/>
            <person name="Ruby E.G."/>
            <person name="Ferriera S."/>
            <person name="Johnson J."/>
            <person name="Kravitz S."/>
            <person name="Beeson K."/>
            <person name="Sutton G."/>
            <person name="Rogers Y.-H."/>
            <person name="Friedman R."/>
            <person name="Frazier M."/>
            <person name="Venter J.C."/>
        </authorList>
    </citation>
    <scope>NUCLEOTIDE SEQUENCE [LARGE SCALE GENOMIC DNA]</scope>
    <source>
        <strain>MJ11</strain>
    </source>
</reference>
<keyword id="KW-0143">Chaperone</keyword>
<keyword id="KW-0963">Cytoplasm</keyword>
<keyword id="KW-0996">Nickel insertion</keyword>
<accession>B5FBC9</accession>
<name>URED_ALIFM</name>
<organism>
    <name type="scientific">Aliivibrio fischeri (strain MJ11)</name>
    <name type="common">Vibrio fischeri</name>
    <dbReference type="NCBI Taxonomy" id="388396"/>
    <lineage>
        <taxon>Bacteria</taxon>
        <taxon>Pseudomonadati</taxon>
        <taxon>Pseudomonadota</taxon>
        <taxon>Gammaproteobacteria</taxon>
        <taxon>Vibrionales</taxon>
        <taxon>Vibrionaceae</taxon>
        <taxon>Aliivibrio</taxon>
    </lineage>
</organism>
<dbReference type="EMBL" id="CP001139">
    <property type="protein sequence ID" value="ACH66745.1"/>
    <property type="molecule type" value="Genomic_DNA"/>
</dbReference>
<dbReference type="RefSeq" id="WP_012533950.1">
    <property type="nucleotide sequence ID" value="NC_011184.1"/>
</dbReference>
<dbReference type="SMR" id="B5FBC9"/>
<dbReference type="KEGG" id="vfm:VFMJ11_0694"/>
<dbReference type="HOGENOM" id="CLU_056339_0_0_6"/>
<dbReference type="Proteomes" id="UP000001857">
    <property type="component" value="Chromosome I"/>
</dbReference>
<dbReference type="GO" id="GO:0005737">
    <property type="term" value="C:cytoplasm"/>
    <property type="evidence" value="ECO:0007669"/>
    <property type="project" value="UniProtKB-SubCell"/>
</dbReference>
<dbReference type="GO" id="GO:0016151">
    <property type="term" value="F:nickel cation binding"/>
    <property type="evidence" value="ECO:0007669"/>
    <property type="project" value="UniProtKB-UniRule"/>
</dbReference>
<dbReference type="HAMAP" id="MF_01384">
    <property type="entry name" value="UreD"/>
    <property type="match status" value="1"/>
</dbReference>
<dbReference type="InterPro" id="IPR002669">
    <property type="entry name" value="UreD"/>
</dbReference>
<dbReference type="PANTHER" id="PTHR33643">
    <property type="entry name" value="UREASE ACCESSORY PROTEIN D"/>
    <property type="match status" value="1"/>
</dbReference>
<dbReference type="PANTHER" id="PTHR33643:SF1">
    <property type="entry name" value="UREASE ACCESSORY PROTEIN D"/>
    <property type="match status" value="1"/>
</dbReference>
<dbReference type="Pfam" id="PF01774">
    <property type="entry name" value="UreD"/>
    <property type="match status" value="1"/>
</dbReference>
<protein>
    <recommendedName>
        <fullName evidence="1">Urease accessory protein UreD</fullName>
    </recommendedName>
</protein>
<comment type="function">
    <text evidence="1">Required for maturation of urease via the functional incorporation of the urease nickel metallocenter.</text>
</comment>
<comment type="subunit">
    <text evidence="1">UreD, UreF and UreG form a complex that acts as a GTP-hydrolysis-dependent molecular chaperone, activating the urease apoprotein by helping to assemble the nickel containing metallocenter of UreC. The UreE protein probably delivers the nickel.</text>
</comment>
<comment type="subcellular location">
    <subcellularLocation>
        <location evidence="1">Cytoplasm</location>
    </subcellularLocation>
</comment>
<comment type="similarity">
    <text evidence="1">Belongs to the UreD family.</text>
</comment>
<gene>
    <name evidence="1" type="primary">ureD</name>
    <name type="ordered locus">VFMJ11_0694</name>
</gene>
<feature type="chain" id="PRO_1000145101" description="Urease accessory protein UreD">
    <location>
        <begin position="1"/>
        <end position="287"/>
    </location>
</feature>